<keyword id="KW-0067">ATP-binding</keyword>
<keyword id="KW-0997">Cell inner membrane</keyword>
<keyword id="KW-1003">Cell membrane</keyword>
<keyword id="KW-0378">Hydrolase</keyword>
<keyword id="KW-0472">Membrane</keyword>
<keyword id="KW-0479">Metal-binding</keyword>
<keyword id="KW-0482">Metalloprotease</keyword>
<keyword id="KW-0547">Nucleotide-binding</keyword>
<keyword id="KW-0645">Protease</keyword>
<keyword id="KW-0812">Transmembrane</keyword>
<keyword id="KW-1133">Transmembrane helix</keyword>
<keyword id="KW-0862">Zinc</keyword>
<name>FTSH2_METI4</name>
<proteinExistence type="inferred from homology"/>
<dbReference type="EC" id="3.4.24.-" evidence="1"/>
<dbReference type="EMBL" id="CP000975">
    <property type="protein sequence ID" value="ACD83966.1"/>
    <property type="molecule type" value="Genomic_DNA"/>
</dbReference>
<dbReference type="SMR" id="B3DY14"/>
<dbReference type="STRING" id="481448.Minf_1912"/>
<dbReference type="KEGG" id="min:Minf_1912"/>
<dbReference type="eggNOG" id="COG0465">
    <property type="taxonomic scope" value="Bacteria"/>
</dbReference>
<dbReference type="HOGENOM" id="CLU_000688_16_0_0"/>
<dbReference type="OrthoDB" id="9809379at2"/>
<dbReference type="Proteomes" id="UP000009149">
    <property type="component" value="Chromosome"/>
</dbReference>
<dbReference type="GO" id="GO:0005886">
    <property type="term" value="C:plasma membrane"/>
    <property type="evidence" value="ECO:0007669"/>
    <property type="project" value="UniProtKB-SubCell"/>
</dbReference>
<dbReference type="GO" id="GO:0005524">
    <property type="term" value="F:ATP binding"/>
    <property type="evidence" value="ECO:0007669"/>
    <property type="project" value="UniProtKB-UniRule"/>
</dbReference>
<dbReference type="GO" id="GO:0016887">
    <property type="term" value="F:ATP hydrolysis activity"/>
    <property type="evidence" value="ECO:0007669"/>
    <property type="project" value="UniProtKB-UniRule"/>
</dbReference>
<dbReference type="GO" id="GO:0004176">
    <property type="term" value="F:ATP-dependent peptidase activity"/>
    <property type="evidence" value="ECO:0007669"/>
    <property type="project" value="InterPro"/>
</dbReference>
<dbReference type="GO" id="GO:0004222">
    <property type="term" value="F:metalloendopeptidase activity"/>
    <property type="evidence" value="ECO:0007669"/>
    <property type="project" value="InterPro"/>
</dbReference>
<dbReference type="GO" id="GO:0008270">
    <property type="term" value="F:zinc ion binding"/>
    <property type="evidence" value="ECO:0007669"/>
    <property type="project" value="UniProtKB-UniRule"/>
</dbReference>
<dbReference type="GO" id="GO:0030163">
    <property type="term" value="P:protein catabolic process"/>
    <property type="evidence" value="ECO:0007669"/>
    <property type="project" value="UniProtKB-UniRule"/>
</dbReference>
<dbReference type="GO" id="GO:0006508">
    <property type="term" value="P:proteolysis"/>
    <property type="evidence" value="ECO:0007669"/>
    <property type="project" value="UniProtKB-KW"/>
</dbReference>
<dbReference type="CDD" id="cd19501">
    <property type="entry name" value="RecA-like_FtsH"/>
    <property type="match status" value="1"/>
</dbReference>
<dbReference type="FunFam" id="1.10.8.60:FF:000001">
    <property type="entry name" value="ATP-dependent zinc metalloprotease FtsH"/>
    <property type="match status" value="1"/>
</dbReference>
<dbReference type="FunFam" id="1.20.58.760:FF:000001">
    <property type="entry name" value="ATP-dependent zinc metalloprotease FtsH"/>
    <property type="match status" value="1"/>
</dbReference>
<dbReference type="FunFam" id="3.40.50.300:FF:000001">
    <property type="entry name" value="ATP-dependent zinc metalloprotease FtsH"/>
    <property type="match status" value="1"/>
</dbReference>
<dbReference type="Gene3D" id="1.10.8.60">
    <property type="match status" value="1"/>
</dbReference>
<dbReference type="Gene3D" id="3.40.50.300">
    <property type="entry name" value="P-loop containing nucleotide triphosphate hydrolases"/>
    <property type="match status" value="1"/>
</dbReference>
<dbReference type="Gene3D" id="1.20.58.760">
    <property type="entry name" value="Peptidase M41"/>
    <property type="match status" value="1"/>
</dbReference>
<dbReference type="HAMAP" id="MF_01458">
    <property type="entry name" value="FtsH"/>
    <property type="match status" value="1"/>
</dbReference>
<dbReference type="InterPro" id="IPR003593">
    <property type="entry name" value="AAA+_ATPase"/>
</dbReference>
<dbReference type="InterPro" id="IPR041569">
    <property type="entry name" value="AAA_lid_3"/>
</dbReference>
<dbReference type="InterPro" id="IPR003959">
    <property type="entry name" value="ATPase_AAA_core"/>
</dbReference>
<dbReference type="InterPro" id="IPR003960">
    <property type="entry name" value="ATPase_AAA_CS"/>
</dbReference>
<dbReference type="InterPro" id="IPR005936">
    <property type="entry name" value="FtsH"/>
</dbReference>
<dbReference type="InterPro" id="IPR027417">
    <property type="entry name" value="P-loop_NTPase"/>
</dbReference>
<dbReference type="InterPro" id="IPR000642">
    <property type="entry name" value="Peptidase_M41"/>
</dbReference>
<dbReference type="InterPro" id="IPR037219">
    <property type="entry name" value="Peptidase_M41-like"/>
</dbReference>
<dbReference type="NCBIfam" id="TIGR01241">
    <property type="entry name" value="FtsH_fam"/>
    <property type="match status" value="1"/>
</dbReference>
<dbReference type="PANTHER" id="PTHR23076:SF97">
    <property type="entry name" value="ATP-DEPENDENT ZINC METALLOPROTEASE YME1L1"/>
    <property type="match status" value="1"/>
</dbReference>
<dbReference type="PANTHER" id="PTHR23076">
    <property type="entry name" value="METALLOPROTEASE M41 FTSH"/>
    <property type="match status" value="1"/>
</dbReference>
<dbReference type="Pfam" id="PF00004">
    <property type="entry name" value="AAA"/>
    <property type="match status" value="1"/>
</dbReference>
<dbReference type="Pfam" id="PF17862">
    <property type="entry name" value="AAA_lid_3"/>
    <property type="match status" value="1"/>
</dbReference>
<dbReference type="Pfam" id="PF01434">
    <property type="entry name" value="Peptidase_M41"/>
    <property type="match status" value="1"/>
</dbReference>
<dbReference type="SMART" id="SM00382">
    <property type="entry name" value="AAA"/>
    <property type="match status" value="1"/>
</dbReference>
<dbReference type="SUPFAM" id="SSF140990">
    <property type="entry name" value="FtsH protease domain-like"/>
    <property type="match status" value="1"/>
</dbReference>
<dbReference type="SUPFAM" id="SSF52540">
    <property type="entry name" value="P-loop containing nucleoside triphosphate hydrolases"/>
    <property type="match status" value="1"/>
</dbReference>
<dbReference type="PROSITE" id="PS00674">
    <property type="entry name" value="AAA"/>
    <property type="match status" value="1"/>
</dbReference>
<protein>
    <recommendedName>
        <fullName evidence="1">ATP-dependent zinc metalloprotease FtsH 2</fullName>
        <ecNumber evidence="1">3.4.24.-</ecNumber>
    </recommendedName>
</protein>
<reference key="1">
    <citation type="journal article" date="2008" name="Biol. Direct">
        <title>Complete genome sequence of the extremely acidophilic methanotroph isolate V4, Methylacidiphilum infernorum, a representative of the bacterial phylum Verrucomicrobia.</title>
        <authorList>
            <person name="Hou S."/>
            <person name="Makarova K.S."/>
            <person name="Saw J.H."/>
            <person name="Senin P."/>
            <person name="Ly B.V."/>
            <person name="Zhou Z."/>
            <person name="Ren Y."/>
            <person name="Wang J."/>
            <person name="Galperin M.Y."/>
            <person name="Omelchenko M.V."/>
            <person name="Wolf Y.I."/>
            <person name="Yutin N."/>
            <person name="Koonin E.V."/>
            <person name="Stott M.B."/>
            <person name="Mountain B.W."/>
            <person name="Crowe M.A."/>
            <person name="Smirnova A.V."/>
            <person name="Dunfield P.F."/>
            <person name="Feng L."/>
            <person name="Wang L."/>
            <person name="Alam M."/>
        </authorList>
    </citation>
    <scope>NUCLEOTIDE SEQUENCE [LARGE SCALE GENOMIC DNA]</scope>
    <source>
        <strain>Isolate V4</strain>
    </source>
</reference>
<organism>
    <name type="scientific">Methylacidiphilum infernorum (isolate V4)</name>
    <name type="common">Methylokorus infernorum (strain V4)</name>
    <dbReference type="NCBI Taxonomy" id="481448"/>
    <lineage>
        <taxon>Bacteria</taxon>
        <taxon>Pseudomonadati</taxon>
        <taxon>Verrucomicrobiota</taxon>
        <taxon>Methylacidiphilae</taxon>
        <taxon>Methylacidiphilales</taxon>
        <taxon>Methylacidiphilaceae</taxon>
        <taxon>Methylacidiphilum (ex Ratnadevi et al. 2023)</taxon>
    </lineage>
</organism>
<sequence length="641" mass="70258">MLAYYVSVNQGPGIEQKSLPQLTRLLDQGRVKALVFIRDTSTGQTFLEGRYTRPAGPTENAEIVVPFRTVVDLEFNRDLKQFLASKGFPEIDVKVIHNFWGQAFLSVLPFLLFILALYFLFRQQIRMAGRGAFSFGKSRARLLSGGKTKVTFKDVAGVEEAKEEVQELVEFLKDPKKFQKLGGRIPKGVLMVGPPGTGKTLLAKAIAGEADVPFFSISGSDFVEMFVGVGASRVRDMFEQARRHAPCIVFIDEIDAVGRARGTGLGGGHDEREQTLNALLVEMDGIESQEGVIVIAATNRKDVLDPALLRPGRFDREVRVNLPDIRGREQILRVHAQKIKLSKNADLSALARGTPGFSGAELANLINEAALIAAKKGKDNVDQPDLEEARDKVRWGKERRSLAMSEEERKTTAYHEAGHAVLNVLLENTDPIHKVTIIPRGPALGVTMMLPASDKYNARKKEVLDDLCVAMGGRVAEEVFLGDISSGASGDIRQATWYARKMVCEWGMSEKLGMVHYADDSSMVFLGRELGTSRGYSEATARAIDHEVQHFIQAAYEKAKRIILEHKDKVEALAQALLEYETLNADQVTEIVKTGKMTNPPSKNSSPVSNGGEASSTKSPARQEETTKDGGLLPGLEGAPA</sequence>
<gene>
    <name evidence="1" type="primary">ftsH2</name>
    <name type="ordered locus">Minf_1912</name>
</gene>
<feature type="chain" id="PRO_0000400354" description="ATP-dependent zinc metalloprotease FtsH 2">
    <location>
        <begin position="1"/>
        <end position="641"/>
    </location>
</feature>
<feature type="topological domain" description="Periplasmic" evidence="1">
    <location>
        <begin position="1"/>
        <end position="100"/>
    </location>
</feature>
<feature type="transmembrane region" description="Helical" evidence="1">
    <location>
        <begin position="101"/>
        <end position="121"/>
    </location>
</feature>
<feature type="topological domain" description="Cytoplasmic" evidence="1">
    <location>
        <begin position="122"/>
        <end position="641"/>
    </location>
</feature>
<feature type="region of interest" description="Disordered" evidence="2">
    <location>
        <begin position="593"/>
        <end position="641"/>
    </location>
</feature>
<feature type="compositionally biased region" description="Low complexity" evidence="2">
    <location>
        <begin position="599"/>
        <end position="610"/>
    </location>
</feature>
<feature type="compositionally biased region" description="Low complexity" evidence="2">
    <location>
        <begin position="630"/>
        <end position="641"/>
    </location>
</feature>
<feature type="active site" evidence="1">
    <location>
        <position position="416"/>
    </location>
</feature>
<feature type="binding site" evidence="1">
    <location>
        <begin position="193"/>
        <end position="200"/>
    </location>
    <ligand>
        <name>ATP</name>
        <dbReference type="ChEBI" id="CHEBI:30616"/>
    </ligand>
</feature>
<feature type="binding site" evidence="1">
    <location>
        <position position="415"/>
    </location>
    <ligand>
        <name>Zn(2+)</name>
        <dbReference type="ChEBI" id="CHEBI:29105"/>
        <note>catalytic</note>
    </ligand>
</feature>
<feature type="binding site" evidence="1">
    <location>
        <position position="419"/>
    </location>
    <ligand>
        <name>Zn(2+)</name>
        <dbReference type="ChEBI" id="CHEBI:29105"/>
        <note>catalytic</note>
    </ligand>
</feature>
<feature type="binding site" evidence="1">
    <location>
        <position position="491"/>
    </location>
    <ligand>
        <name>Zn(2+)</name>
        <dbReference type="ChEBI" id="CHEBI:29105"/>
        <note>catalytic</note>
    </ligand>
</feature>
<accession>B3DY14</accession>
<comment type="function">
    <text evidence="1">Acts as a processive, ATP-dependent zinc metallopeptidase for both cytoplasmic and membrane proteins. Plays a role in the quality control of integral membrane proteins.</text>
</comment>
<comment type="cofactor">
    <cofactor evidence="1">
        <name>Zn(2+)</name>
        <dbReference type="ChEBI" id="CHEBI:29105"/>
    </cofactor>
    <text evidence="1">Binds 1 zinc ion per subunit.</text>
</comment>
<comment type="subunit">
    <text evidence="1">Homohexamer.</text>
</comment>
<comment type="subcellular location">
    <subcellularLocation>
        <location evidence="1">Cell inner membrane</location>
        <topology evidence="1">Single-pass membrane protein</topology>
        <orientation evidence="1">Cytoplasmic side</orientation>
    </subcellularLocation>
</comment>
<comment type="similarity">
    <text evidence="1">In the central section; belongs to the AAA ATPase family.</text>
</comment>
<comment type="similarity">
    <text evidence="1">In the C-terminal section; belongs to the peptidase M41 family.</text>
</comment>
<evidence type="ECO:0000255" key="1">
    <source>
        <dbReference type="HAMAP-Rule" id="MF_01458"/>
    </source>
</evidence>
<evidence type="ECO:0000256" key="2">
    <source>
        <dbReference type="SAM" id="MobiDB-lite"/>
    </source>
</evidence>